<evidence type="ECO:0000250" key="1"/>
<evidence type="ECO:0000250" key="2">
    <source>
        <dbReference type="UniProtKB" id="P62424"/>
    </source>
</evidence>
<evidence type="ECO:0000256" key="3">
    <source>
        <dbReference type="SAM" id="MobiDB-lite"/>
    </source>
</evidence>
<evidence type="ECO:0000305" key="4"/>
<name>RL7A_CHICK</name>
<gene>
    <name type="primary">RPL7A</name>
    <name type="synonym">SURF-3</name>
</gene>
<sequence length="266" mass="30000">MPKGKKAKGKKVAPAPAVVKKQEAKKVVNPLFEKRPKNFGIGQDIQPKRDLTRFVKWPRYIRLQRQRSILYKRLKVPPAINQFSQALDRQTATQLLKLAHKYRPETKQEKKQRLLARAEQKAAGKGDTPTKRPPVLRAGVNTVTTLVENKKAQLVVIAHDVDPIELVVFLPALCRKMGVPYCIIKSKARLGRLVHRKTCTCVAFTQVNPEDKGALAKLVEAVKTNYNDRYDEIRRHWGGNVLGPKSVARIAKLEKAKAKELATKLG</sequence>
<accession>P32429</accession>
<accession>Q78DL4</accession>
<protein>
    <recommendedName>
        <fullName evidence="4">Large ribosomal subunit protein eL8</fullName>
    </recommendedName>
    <alternativeName>
        <fullName>60S ribosomal protein L7a</fullName>
    </alternativeName>
</protein>
<proteinExistence type="evidence at protein level"/>
<comment type="function">
    <text evidence="2">Component of the large ribosomal subunit. The ribosome is a large ribonucleoprotein complex responsible for the synthesis of proteins in the cell.</text>
</comment>
<comment type="subunit">
    <text evidence="2">Component of the large ribosomal subunit.</text>
</comment>
<comment type="subcellular location">
    <subcellularLocation>
        <location evidence="2">Cytoplasm</location>
    </subcellularLocation>
</comment>
<comment type="similarity">
    <text evidence="4">Belongs to the eukaryotic ribosomal protein eL8 family.</text>
</comment>
<feature type="initiator methionine" description="Removed" evidence="1">
    <location>
        <position position="1"/>
    </location>
</feature>
<feature type="chain" id="PRO_0000136751" description="Large ribosomal subunit protein eL8">
    <location>
        <begin position="2"/>
        <end position="266"/>
    </location>
</feature>
<feature type="region of interest" description="Disordered" evidence="3">
    <location>
        <begin position="104"/>
        <end position="135"/>
    </location>
</feature>
<feature type="compositionally biased region" description="Basic and acidic residues" evidence="3">
    <location>
        <begin position="104"/>
        <end position="130"/>
    </location>
</feature>
<organism>
    <name type="scientific">Gallus gallus</name>
    <name type="common">Chicken</name>
    <dbReference type="NCBI Taxonomy" id="9031"/>
    <lineage>
        <taxon>Eukaryota</taxon>
        <taxon>Metazoa</taxon>
        <taxon>Chordata</taxon>
        <taxon>Craniata</taxon>
        <taxon>Vertebrata</taxon>
        <taxon>Euteleostomi</taxon>
        <taxon>Archelosauria</taxon>
        <taxon>Archosauria</taxon>
        <taxon>Dinosauria</taxon>
        <taxon>Saurischia</taxon>
        <taxon>Theropoda</taxon>
        <taxon>Coelurosauria</taxon>
        <taxon>Aves</taxon>
        <taxon>Neognathae</taxon>
        <taxon>Galloanserae</taxon>
        <taxon>Galliformes</taxon>
        <taxon>Phasianidae</taxon>
        <taxon>Phasianinae</taxon>
        <taxon>Gallus</taxon>
    </lineage>
</organism>
<dbReference type="EMBL" id="X62640">
    <property type="protein sequence ID" value="CAA44506.1"/>
    <property type="molecule type" value="mRNA"/>
</dbReference>
<dbReference type="EMBL" id="D14522">
    <property type="protein sequence ID" value="BAA03395.1"/>
    <property type="molecule type" value="Genomic_DNA"/>
</dbReference>
<dbReference type="EMBL" id="AB050009">
    <property type="protein sequence ID" value="BAC65169.1"/>
    <property type="molecule type" value="Genomic_DNA"/>
</dbReference>
<dbReference type="PIR" id="A46032">
    <property type="entry name" value="S18159"/>
</dbReference>
<dbReference type="RefSeq" id="NP_001004379.1">
    <property type="nucleotide sequence ID" value="NM_001004379.2"/>
</dbReference>
<dbReference type="PDB" id="8Q7Z">
    <property type="method" value="EM"/>
    <property type="resolution" value="2.50 A"/>
    <property type="chains" value="BG=1-266"/>
</dbReference>
<dbReference type="PDB" id="8Q87">
    <property type="method" value="EM"/>
    <property type="resolution" value="2.40 A"/>
    <property type="chains" value="BG=1-266"/>
</dbReference>
<dbReference type="PDBsum" id="8Q7Z"/>
<dbReference type="PDBsum" id="8Q87"/>
<dbReference type="SMR" id="P32429"/>
<dbReference type="BioGRID" id="678553">
    <property type="interactions" value="1"/>
</dbReference>
<dbReference type="FunCoup" id="P32429">
    <property type="interactions" value="1962"/>
</dbReference>
<dbReference type="STRING" id="9031.ENSGALP00000060146"/>
<dbReference type="PaxDb" id="9031-ENSGALP00000038463"/>
<dbReference type="Ensembl" id="ENSGALT00010069799.1">
    <property type="protein sequence ID" value="ENSGALP00010042925.1"/>
    <property type="gene ID" value="ENSGALG00010028854.1"/>
</dbReference>
<dbReference type="GeneID" id="417158"/>
<dbReference type="KEGG" id="gga:417158"/>
<dbReference type="CTD" id="6130"/>
<dbReference type="VEuPathDB" id="HostDB:geneid_417158"/>
<dbReference type="eggNOG" id="KOG3166">
    <property type="taxonomic scope" value="Eukaryota"/>
</dbReference>
<dbReference type="GeneTree" id="ENSGT00940000153294"/>
<dbReference type="HOGENOM" id="CLU_055193_0_1_1"/>
<dbReference type="InParanoid" id="P32429"/>
<dbReference type="OMA" id="RMVKWPA"/>
<dbReference type="OrthoDB" id="29563at2759"/>
<dbReference type="PhylomeDB" id="P32429"/>
<dbReference type="PRO" id="PR:P32429"/>
<dbReference type="Proteomes" id="UP000000539">
    <property type="component" value="Chromosome 17"/>
</dbReference>
<dbReference type="GO" id="GO:0022625">
    <property type="term" value="C:cytosolic large ribosomal subunit"/>
    <property type="evidence" value="ECO:0000318"/>
    <property type="project" value="GO_Central"/>
</dbReference>
<dbReference type="GO" id="GO:0003723">
    <property type="term" value="F:RNA binding"/>
    <property type="evidence" value="ECO:0000318"/>
    <property type="project" value="GO_Central"/>
</dbReference>
<dbReference type="GO" id="GO:0000470">
    <property type="term" value="P:maturation of LSU-rRNA"/>
    <property type="evidence" value="ECO:0000318"/>
    <property type="project" value="GO_Central"/>
</dbReference>
<dbReference type="FunFam" id="3.30.1330.30:FF:000003">
    <property type="entry name" value="60S ribosomal protein L7a"/>
    <property type="match status" value="1"/>
</dbReference>
<dbReference type="Gene3D" id="3.30.1330.30">
    <property type="match status" value="1"/>
</dbReference>
<dbReference type="InterPro" id="IPR050257">
    <property type="entry name" value="eL8/uL1-like"/>
</dbReference>
<dbReference type="InterPro" id="IPR029064">
    <property type="entry name" value="Ribosomal_eL30-like_sf"/>
</dbReference>
<dbReference type="InterPro" id="IPR004037">
    <property type="entry name" value="Ribosomal_eL8-like_CS"/>
</dbReference>
<dbReference type="InterPro" id="IPR004038">
    <property type="entry name" value="Ribosomal_eL8/eL30/eS12/Gad45"/>
</dbReference>
<dbReference type="InterPro" id="IPR018492">
    <property type="entry name" value="Ribosomal_eL8/Nhp2"/>
</dbReference>
<dbReference type="InterPro" id="IPR001921">
    <property type="entry name" value="Ribosomal_eL8_euk"/>
</dbReference>
<dbReference type="PANTHER" id="PTHR23105">
    <property type="entry name" value="RIBOSOMAL PROTEIN L7AE FAMILY MEMBER"/>
    <property type="match status" value="1"/>
</dbReference>
<dbReference type="Pfam" id="PF01248">
    <property type="entry name" value="Ribosomal_L7Ae"/>
    <property type="match status" value="1"/>
</dbReference>
<dbReference type="PRINTS" id="PR00881">
    <property type="entry name" value="L7ARS6FAMILY"/>
</dbReference>
<dbReference type="PRINTS" id="PR00882">
    <property type="entry name" value="RIBOSOMALL7A"/>
</dbReference>
<dbReference type="SUPFAM" id="SSF55315">
    <property type="entry name" value="L30e-like"/>
    <property type="match status" value="1"/>
</dbReference>
<dbReference type="PROSITE" id="PS01082">
    <property type="entry name" value="RIBOSOMAL_L7AE"/>
    <property type="match status" value="1"/>
</dbReference>
<keyword id="KW-0002">3D-structure</keyword>
<keyword id="KW-0963">Cytoplasm</keyword>
<keyword id="KW-1185">Reference proteome</keyword>
<keyword id="KW-0687">Ribonucleoprotein</keyword>
<keyword id="KW-0689">Ribosomal protein</keyword>
<reference key="1">
    <citation type="journal article" date="1992" name="Proc. Natl. Acad. Sci. U.S.A.">
        <title>Conservation of the organization of five tightly clustered genes over 600 million years of divergent evolution.</title>
        <authorList>
            <person name="Colombo P."/>
            <person name="Yon J."/>
            <person name="Garson K."/>
            <person name="Fried M."/>
        </authorList>
    </citation>
    <scope>NUCLEOTIDE SEQUENCE [MRNA]</scope>
    <source>
        <tissue>Liver</tissue>
    </source>
</reference>
<reference key="2">
    <citation type="journal article" date="1993" name="Biochimie">
        <title>The complete nucleotide sequence of chicken ribosomal protein L7a gene and the multiple factor binding sites in its 5'-flanking region.</title>
        <authorList>
            <person name="Maeda N."/>
            <person name="Kenmochi N."/>
            <person name="Tanaka T."/>
        </authorList>
    </citation>
    <scope>NUCLEOTIDE SEQUENCE [GENOMIC DNA]</scope>
    <source>
        <tissue>Liver</tissue>
    </source>
</reference>
<reference key="3">
    <citation type="submission" date="2000-10" db="EMBL/GenBank/DDBJ databases">
        <title>The gene cluster containing ribosomal protein L7a gene of the chicken.</title>
        <authorList>
            <person name="Maeda N."/>
            <person name="Toku S."/>
            <person name="Kenmochi N."/>
            <person name="Tanaka T."/>
        </authorList>
    </citation>
    <scope>NUCLEOTIDE SEQUENCE [GENOMIC DNA]</scope>
    <source>
        <tissue>Liver</tissue>
    </source>
</reference>